<comment type="function">
    <text evidence="1">Involved in glucosinolate biosynthesis. Hydrolyzes the gamma-glutamyl peptide bond of several glutathione (GSH) conjugates to produce Cys-Gly conjugates related to glucosinolates. The gamma-Glu-Cys-Gly-GSH conjugates are the sulfur-donating molecule in glucosinolate biosynthesis.</text>
</comment>
<comment type="pathway">
    <text evidence="3">Secondary metabolite biosynthesis.</text>
</comment>
<comment type="subcellular location">
    <subcellularLocation>
        <location evidence="1">Cytoplasm</location>
        <location evidence="1">Cytosol</location>
    </subcellularLocation>
</comment>
<comment type="similarity">
    <text evidence="3">Belongs to the peptidase C26 family.</text>
</comment>
<comment type="sequence caution" evidence="3">
    <conflict type="erroneous gene model prediction">
        <sequence resource="EMBL-CDS" id="AAC63681"/>
    </conflict>
</comment>
<feature type="chain" id="PRO_0000435503" description="Gamma-glutamyl peptidase 4">
    <location>
        <begin position="1"/>
        <end position="251"/>
    </location>
</feature>
<feature type="domain" description="Glutamine amidotransferase type-1" evidence="2">
    <location>
        <begin position="16"/>
        <end position="213"/>
    </location>
</feature>
<feature type="active site" description="Nucleophile" evidence="2">
    <location>
        <position position="100"/>
    </location>
</feature>
<feature type="active site" evidence="2">
    <location>
        <position position="192"/>
    </location>
</feature>
<feature type="active site" evidence="2">
    <location>
        <position position="194"/>
    </location>
</feature>
<reference key="1">
    <citation type="journal article" date="1999" name="Nature">
        <title>Sequence and analysis of chromosome 2 of the plant Arabidopsis thaliana.</title>
        <authorList>
            <person name="Lin X."/>
            <person name="Kaul S."/>
            <person name="Rounsley S.D."/>
            <person name="Shea T.P."/>
            <person name="Benito M.-I."/>
            <person name="Town C.D."/>
            <person name="Fujii C.Y."/>
            <person name="Mason T.M."/>
            <person name="Bowman C.L."/>
            <person name="Barnstead M.E."/>
            <person name="Feldblyum T.V."/>
            <person name="Buell C.R."/>
            <person name="Ketchum K.A."/>
            <person name="Lee J.J."/>
            <person name="Ronning C.M."/>
            <person name="Koo H.L."/>
            <person name="Moffat K.S."/>
            <person name="Cronin L.A."/>
            <person name="Shen M."/>
            <person name="Pai G."/>
            <person name="Van Aken S."/>
            <person name="Umayam L."/>
            <person name="Tallon L.J."/>
            <person name="Gill J.E."/>
            <person name="Adams M.D."/>
            <person name="Carrera A.J."/>
            <person name="Creasy T.H."/>
            <person name="Goodman H.M."/>
            <person name="Somerville C.R."/>
            <person name="Copenhaver G.P."/>
            <person name="Preuss D."/>
            <person name="Nierman W.C."/>
            <person name="White O."/>
            <person name="Eisen J.A."/>
            <person name="Salzberg S.L."/>
            <person name="Fraser C.M."/>
            <person name="Venter J.C."/>
        </authorList>
    </citation>
    <scope>NUCLEOTIDE SEQUENCE [LARGE SCALE GENOMIC DNA]</scope>
    <source>
        <strain>cv. Columbia</strain>
    </source>
</reference>
<reference key="2">
    <citation type="journal article" date="2017" name="Plant J.">
        <title>Araport11: a complete reannotation of the Arabidopsis thaliana reference genome.</title>
        <authorList>
            <person name="Cheng C.Y."/>
            <person name="Krishnakumar V."/>
            <person name="Chan A.P."/>
            <person name="Thibaud-Nissen F."/>
            <person name="Schobel S."/>
            <person name="Town C.D."/>
        </authorList>
    </citation>
    <scope>GENOME REANNOTATION</scope>
    <source>
        <strain>cv. Columbia</strain>
    </source>
</reference>
<sequence>MAEQKKYLLFLATPDSEFAKKTYGGYHNVFVSLLGDEGEQWDSFRVVDGEFPEEKDLEKYEGFVISGSSHDAFQDTDWILKLCDIIKKLDDMNKKVLGICFGHQLIARAKGGKVARARKGPELCLGNITIVKEAVMPENYFGEEVPANLRIIKCHQDEVLELPENAKLLAYSSMYEVEMYSIKDNFLCIQGHPEYNRDILFDIIDRVLAGGHIKQNFAETSKATMEKNEADRKFWQKICKNFLKRQPSLLV</sequence>
<accession>F4INN2</accession>
<accession>O82224</accession>
<evidence type="ECO:0000250" key="1">
    <source>
        <dbReference type="UniProtKB" id="Q9M0A7"/>
    </source>
</evidence>
<evidence type="ECO:0000255" key="2">
    <source>
        <dbReference type="PROSITE-ProRule" id="PRU00605"/>
    </source>
</evidence>
<evidence type="ECO:0000305" key="3"/>
<evidence type="ECO:0000312" key="4">
    <source>
        <dbReference type="Araport" id="AT2G23960"/>
    </source>
</evidence>
<proteinExistence type="inferred from homology"/>
<protein>
    <recommendedName>
        <fullName evidence="3">Gamma-glutamyl peptidase 4</fullName>
        <ecNumber evidence="3">3.4.19.-</ecNumber>
    </recommendedName>
</protein>
<keyword id="KW-0963">Cytoplasm</keyword>
<keyword id="KW-0378">Hydrolase</keyword>
<keyword id="KW-0645">Protease</keyword>
<keyword id="KW-1185">Reference proteome</keyword>
<organism>
    <name type="scientific">Arabidopsis thaliana</name>
    <name type="common">Mouse-ear cress</name>
    <dbReference type="NCBI Taxonomy" id="3702"/>
    <lineage>
        <taxon>Eukaryota</taxon>
        <taxon>Viridiplantae</taxon>
        <taxon>Streptophyta</taxon>
        <taxon>Embryophyta</taxon>
        <taxon>Tracheophyta</taxon>
        <taxon>Spermatophyta</taxon>
        <taxon>Magnoliopsida</taxon>
        <taxon>eudicotyledons</taxon>
        <taxon>Gunneridae</taxon>
        <taxon>Pentapetalae</taxon>
        <taxon>rosids</taxon>
        <taxon>malvids</taxon>
        <taxon>Brassicales</taxon>
        <taxon>Brassicaceae</taxon>
        <taxon>Camelineae</taxon>
        <taxon>Arabidopsis</taxon>
    </lineage>
</organism>
<name>GGP4_ARATH</name>
<gene>
    <name evidence="3" type="primary">GGP4</name>
    <name evidence="4" type="ordered locus">At2g23960</name>
</gene>
<dbReference type="EC" id="3.4.19.-" evidence="3"/>
<dbReference type="EMBL" id="AC005170">
    <property type="protein sequence ID" value="AAC63681.1"/>
    <property type="status" value="ALT_SEQ"/>
    <property type="molecule type" value="Genomic_DNA"/>
</dbReference>
<dbReference type="EMBL" id="CP002685">
    <property type="protein sequence ID" value="AEC07508.1"/>
    <property type="molecule type" value="Genomic_DNA"/>
</dbReference>
<dbReference type="PIR" id="H84630">
    <property type="entry name" value="H84630"/>
</dbReference>
<dbReference type="RefSeq" id="NP_001323529.1">
    <property type="nucleotide sequence ID" value="NM_001335877.1"/>
</dbReference>
<dbReference type="RefSeq" id="NP_179974.2">
    <property type="nucleotide sequence ID" value="NM_127958.3"/>
</dbReference>
<dbReference type="SMR" id="F4INN2"/>
<dbReference type="FunCoup" id="F4INN2">
    <property type="interactions" value="38"/>
</dbReference>
<dbReference type="STRING" id="3702.F4INN2"/>
<dbReference type="MEROPS" id="C26.A05"/>
<dbReference type="PaxDb" id="3702-AT2G23960.1"/>
<dbReference type="EnsemblPlants" id="AT2G23960.1">
    <property type="protein sequence ID" value="AT2G23960.1"/>
    <property type="gene ID" value="AT2G23960"/>
</dbReference>
<dbReference type="GeneID" id="816929"/>
<dbReference type="Gramene" id="AT2G23960.1">
    <property type="protein sequence ID" value="AT2G23960.1"/>
    <property type="gene ID" value="AT2G23960"/>
</dbReference>
<dbReference type="KEGG" id="ath:AT2G23960"/>
<dbReference type="Araport" id="AT2G23960"/>
<dbReference type="TAIR" id="AT2G23960"/>
<dbReference type="eggNOG" id="KOG3179">
    <property type="taxonomic scope" value="Eukaryota"/>
</dbReference>
<dbReference type="HOGENOM" id="CLU_054974_0_1_1"/>
<dbReference type="InParanoid" id="F4INN2"/>
<dbReference type="OMA" id="IEENFLC"/>
<dbReference type="OrthoDB" id="92161at2759"/>
<dbReference type="PRO" id="PR:F4INN2"/>
<dbReference type="Proteomes" id="UP000006548">
    <property type="component" value="Chromosome 2"/>
</dbReference>
<dbReference type="ExpressionAtlas" id="F4INN2">
    <property type="expression patterns" value="baseline and differential"/>
</dbReference>
<dbReference type="GO" id="GO:0005829">
    <property type="term" value="C:cytosol"/>
    <property type="evidence" value="ECO:0007669"/>
    <property type="project" value="UniProtKB-SubCell"/>
</dbReference>
<dbReference type="GO" id="GO:0008233">
    <property type="term" value="F:peptidase activity"/>
    <property type="evidence" value="ECO:0007669"/>
    <property type="project" value="UniProtKB-KW"/>
</dbReference>
<dbReference type="GO" id="GO:0006508">
    <property type="term" value="P:proteolysis"/>
    <property type="evidence" value="ECO:0007669"/>
    <property type="project" value="UniProtKB-KW"/>
</dbReference>
<dbReference type="CDD" id="cd01741">
    <property type="entry name" value="GATase1_1"/>
    <property type="match status" value="1"/>
</dbReference>
<dbReference type="FunFam" id="3.40.50.880:FF:000040">
    <property type="entry name" value="Gamma-glutamyl peptidase 5"/>
    <property type="match status" value="1"/>
</dbReference>
<dbReference type="Gene3D" id="3.40.50.880">
    <property type="match status" value="1"/>
</dbReference>
<dbReference type="InterPro" id="IPR044992">
    <property type="entry name" value="ChyE-like"/>
</dbReference>
<dbReference type="InterPro" id="IPR029062">
    <property type="entry name" value="Class_I_gatase-like"/>
</dbReference>
<dbReference type="InterPro" id="IPR017926">
    <property type="entry name" value="GATASE"/>
</dbReference>
<dbReference type="PANTHER" id="PTHR42695:SF12">
    <property type="entry name" value="GAMMA-GLUTAMYL PEPTIDASE 4"/>
    <property type="match status" value="1"/>
</dbReference>
<dbReference type="PANTHER" id="PTHR42695">
    <property type="entry name" value="GLUTAMINE AMIDOTRANSFERASE YLR126C-RELATED"/>
    <property type="match status" value="1"/>
</dbReference>
<dbReference type="Pfam" id="PF00117">
    <property type="entry name" value="GATase"/>
    <property type="match status" value="1"/>
</dbReference>
<dbReference type="SUPFAM" id="SSF52317">
    <property type="entry name" value="Class I glutamine amidotransferase-like"/>
    <property type="match status" value="1"/>
</dbReference>
<dbReference type="PROSITE" id="PS51273">
    <property type="entry name" value="GATASE_TYPE_1"/>
    <property type="match status" value="1"/>
</dbReference>